<protein>
    <recommendedName>
        <fullName evidence="1">DNA-directed RNA polymerase subunit beta'</fullName>
        <ecNumber evidence="1">2.7.7.6</ecNumber>
    </recommendedName>
    <alternativeName>
        <fullName evidence="1">PEP</fullName>
    </alternativeName>
    <alternativeName>
        <fullName evidence="1">Plastid-encoded RNA polymerase subunit beta'</fullName>
        <shortName evidence="1">RNA polymerase subunit beta'</shortName>
    </alternativeName>
</protein>
<comment type="function">
    <text evidence="1">DNA-dependent RNA polymerase catalyzes the transcription of DNA into RNA using the four ribonucleoside triphosphates as substrates.</text>
</comment>
<comment type="catalytic activity">
    <reaction evidence="1">
        <text>RNA(n) + a ribonucleoside 5'-triphosphate = RNA(n+1) + diphosphate</text>
        <dbReference type="Rhea" id="RHEA:21248"/>
        <dbReference type="Rhea" id="RHEA-COMP:14527"/>
        <dbReference type="Rhea" id="RHEA-COMP:17342"/>
        <dbReference type="ChEBI" id="CHEBI:33019"/>
        <dbReference type="ChEBI" id="CHEBI:61557"/>
        <dbReference type="ChEBI" id="CHEBI:140395"/>
        <dbReference type="EC" id="2.7.7.6"/>
    </reaction>
</comment>
<comment type="cofactor">
    <cofactor evidence="1">
        <name>Mg(2+)</name>
        <dbReference type="ChEBI" id="CHEBI:18420"/>
    </cofactor>
    <text evidence="1">Binds 1 Mg(2+) ion per subunit.</text>
</comment>
<comment type="cofactor">
    <cofactor evidence="1">
        <name>Zn(2+)</name>
        <dbReference type="ChEBI" id="CHEBI:29105"/>
    </cofactor>
    <text evidence="1">Binds 1 Zn(2+) ion per subunit.</text>
</comment>
<comment type="subunit">
    <text evidence="1">In plastids the minimal PEP RNA polymerase catalytic core is composed of four subunits: alpha, beta, beta', and beta''. When a (nuclear-encoded) sigma factor is associated with the core the holoenzyme is formed, which can initiate transcription.</text>
</comment>
<comment type="subcellular location">
    <subcellularLocation>
        <location evidence="1">Plastid</location>
        <location evidence="1">Chloroplast</location>
    </subcellularLocation>
</comment>
<comment type="similarity">
    <text evidence="1">Belongs to the RNA polymerase beta' chain family. RpoC1 subfamily.</text>
</comment>
<organism>
    <name type="scientific">Guillardia theta</name>
    <name type="common">Cryptophyte</name>
    <name type="synonym">Cryptomonas phi</name>
    <dbReference type="NCBI Taxonomy" id="55529"/>
    <lineage>
        <taxon>Eukaryota</taxon>
        <taxon>Cryptophyceae</taxon>
        <taxon>Pyrenomonadales</taxon>
        <taxon>Geminigeraceae</taxon>
        <taxon>Guillardia</taxon>
    </lineage>
</organism>
<proteinExistence type="inferred from homology"/>
<sequence length="623" mass="71568">MSKLEQYFDYVKINLASPQRIKKWGERRLPNGQVVGEVTKPETINYRTLKPEMDGLFCERIFGPVKDWECHCGKYKRVRYKGIVCERCGVEVAESKVRRHRMGYIELAAPVTHVWYLKSLPSYISILLDIPLKDVEQVVYFNSYVVTKPGNCTNLRYKQLLSEDEWIAIEDQLYQEDSELTGVEVGIGAEAIQKLLRDIDLEVEAESLREEILVVKGIKKDKSIKRLRVIDNFIATRSDPTWMILTVLPVIPPDLRPMVQLDGGRFATSDLNDLYRRVLNRNNRLIRLQEILAPEIIIRNEKRMLQESVDALIDNGRRGRTVMGANNRPLKSLSDIIEGKQGRFRQNLLGKRVDYSGRSVIVVGPQLELNQCGLPREMALELFQPFVIHKLIQQGLVNNIKAAKRLIQKNELIVWNVLEEVIQGHPILLNRAPTLHRLGIQAFEPILVEGRAIKLHPLVCPAFNADFDGDQMAVHIPLSLEAQAEARMLMLAPYNFLSPATGDPIIMPSQDMVLGCYYLTAENPSQQVNRSLYFSNFDDVLLAYETKLIKLHSYVWVRFNGNVDDDDEKIEEKKLDGNKKLHIYPSRIKKLDQDNNLMVQYILTTPGRILLNNVLFDSLQLQF</sequence>
<feature type="chain" id="PRO_0000067874" description="DNA-directed RNA polymerase subunit beta'">
    <location>
        <begin position="1"/>
        <end position="623"/>
    </location>
</feature>
<feature type="binding site" evidence="1">
    <location>
        <position position="70"/>
    </location>
    <ligand>
        <name>Zn(2+)</name>
        <dbReference type="ChEBI" id="CHEBI:29105"/>
    </ligand>
</feature>
<feature type="binding site" evidence="1">
    <location>
        <position position="72"/>
    </location>
    <ligand>
        <name>Zn(2+)</name>
        <dbReference type="ChEBI" id="CHEBI:29105"/>
    </ligand>
</feature>
<feature type="binding site" evidence="1">
    <location>
        <position position="85"/>
    </location>
    <ligand>
        <name>Zn(2+)</name>
        <dbReference type="ChEBI" id="CHEBI:29105"/>
    </ligand>
</feature>
<feature type="binding site" evidence="1">
    <location>
        <position position="88"/>
    </location>
    <ligand>
        <name>Zn(2+)</name>
        <dbReference type="ChEBI" id="CHEBI:29105"/>
    </ligand>
</feature>
<feature type="binding site" evidence="1">
    <location>
        <position position="466"/>
    </location>
    <ligand>
        <name>Mg(2+)</name>
        <dbReference type="ChEBI" id="CHEBI:18420"/>
    </ligand>
</feature>
<feature type="binding site" evidence="1">
    <location>
        <position position="468"/>
    </location>
    <ligand>
        <name>Mg(2+)</name>
        <dbReference type="ChEBI" id="CHEBI:18420"/>
    </ligand>
</feature>
<feature type="binding site" evidence="1">
    <location>
        <position position="470"/>
    </location>
    <ligand>
        <name>Mg(2+)</name>
        <dbReference type="ChEBI" id="CHEBI:18420"/>
    </ligand>
</feature>
<evidence type="ECO:0000255" key="1">
    <source>
        <dbReference type="HAMAP-Rule" id="MF_01323"/>
    </source>
</evidence>
<reference key="1">
    <citation type="journal article" date="1999" name="J. Mol. Evol.">
        <title>The plastid genome of the cryptophyte alga, Guillardia theta: complete sequence and conserved synteny groups confirm its common ancestry with red algae.</title>
        <authorList>
            <person name="Douglas S.E."/>
            <person name="Penny S.L."/>
        </authorList>
    </citation>
    <scope>NUCLEOTIDE SEQUENCE [LARGE SCALE GENOMIC DNA]</scope>
</reference>
<name>RPOC1_GUITH</name>
<gene>
    <name evidence="1" type="primary">rpoC1</name>
</gene>
<keyword id="KW-0150">Chloroplast</keyword>
<keyword id="KW-0240">DNA-directed RNA polymerase</keyword>
<keyword id="KW-0460">Magnesium</keyword>
<keyword id="KW-0479">Metal-binding</keyword>
<keyword id="KW-0548">Nucleotidyltransferase</keyword>
<keyword id="KW-0934">Plastid</keyword>
<keyword id="KW-0804">Transcription</keyword>
<keyword id="KW-0808">Transferase</keyword>
<keyword id="KW-0862">Zinc</keyword>
<dbReference type="EC" id="2.7.7.6" evidence="1"/>
<dbReference type="EMBL" id="AF041468">
    <property type="protein sequence ID" value="AAC35675.1"/>
    <property type="molecule type" value="Genomic_DNA"/>
</dbReference>
<dbReference type="RefSeq" id="NP_050741.1">
    <property type="nucleotide sequence ID" value="NC_000926.1"/>
</dbReference>
<dbReference type="SMR" id="O78484"/>
<dbReference type="GeneID" id="857046"/>
<dbReference type="HOGENOM" id="CLU_030022_2_0_1"/>
<dbReference type="OMA" id="WGERTLP"/>
<dbReference type="GO" id="GO:0009507">
    <property type="term" value="C:chloroplast"/>
    <property type="evidence" value="ECO:0007669"/>
    <property type="project" value="UniProtKB-SubCell"/>
</dbReference>
<dbReference type="GO" id="GO:0000428">
    <property type="term" value="C:DNA-directed RNA polymerase complex"/>
    <property type="evidence" value="ECO:0007669"/>
    <property type="project" value="UniProtKB-KW"/>
</dbReference>
<dbReference type="GO" id="GO:0005739">
    <property type="term" value="C:mitochondrion"/>
    <property type="evidence" value="ECO:0007669"/>
    <property type="project" value="GOC"/>
</dbReference>
<dbReference type="GO" id="GO:0003677">
    <property type="term" value="F:DNA binding"/>
    <property type="evidence" value="ECO:0007669"/>
    <property type="project" value="UniProtKB-UniRule"/>
</dbReference>
<dbReference type="GO" id="GO:0003899">
    <property type="term" value="F:DNA-directed RNA polymerase activity"/>
    <property type="evidence" value="ECO:0007669"/>
    <property type="project" value="UniProtKB-UniRule"/>
</dbReference>
<dbReference type="GO" id="GO:0000287">
    <property type="term" value="F:magnesium ion binding"/>
    <property type="evidence" value="ECO:0007669"/>
    <property type="project" value="UniProtKB-UniRule"/>
</dbReference>
<dbReference type="GO" id="GO:0008270">
    <property type="term" value="F:zinc ion binding"/>
    <property type="evidence" value="ECO:0007669"/>
    <property type="project" value="UniProtKB-UniRule"/>
</dbReference>
<dbReference type="GO" id="GO:0006351">
    <property type="term" value="P:DNA-templated transcription"/>
    <property type="evidence" value="ECO:0007669"/>
    <property type="project" value="UniProtKB-UniRule"/>
</dbReference>
<dbReference type="Gene3D" id="1.10.40.90">
    <property type="match status" value="1"/>
</dbReference>
<dbReference type="Gene3D" id="2.40.40.20">
    <property type="match status" value="1"/>
</dbReference>
<dbReference type="Gene3D" id="4.10.860.120">
    <property type="entry name" value="RNA polymerase II, clamp domain"/>
    <property type="match status" value="1"/>
</dbReference>
<dbReference type="Gene3D" id="1.10.274.100">
    <property type="entry name" value="RNA polymerase Rpb1, domain 3"/>
    <property type="match status" value="1"/>
</dbReference>
<dbReference type="HAMAP" id="MF_01323">
    <property type="entry name" value="RNApol_bact_RpoC1"/>
    <property type="match status" value="1"/>
</dbReference>
<dbReference type="InterPro" id="IPR012755">
    <property type="entry name" value="DNA-dir_RpoC1_gamma"/>
</dbReference>
<dbReference type="InterPro" id="IPR045867">
    <property type="entry name" value="DNA-dir_RpoC_beta_prime"/>
</dbReference>
<dbReference type="InterPro" id="IPR000722">
    <property type="entry name" value="RNA_pol_asu"/>
</dbReference>
<dbReference type="InterPro" id="IPR006592">
    <property type="entry name" value="RNA_pol_N"/>
</dbReference>
<dbReference type="InterPro" id="IPR007080">
    <property type="entry name" value="RNA_pol_Rpb1_1"/>
</dbReference>
<dbReference type="InterPro" id="IPR007066">
    <property type="entry name" value="RNA_pol_Rpb1_3"/>
</dbReference>
<dbReference type="InterPro" id="IPR042102">
    <property type="entry name" value="RNA_pol_Rpb1_3_sf"/>
</dbReference>
<dbReference type="InterPro" id="IPR044893">
    <property type="entry name" value="RNA_pol_Rpb1_clamp_domain"/>
</dbReference>
<dbReference type="InterPro" id="IPR034678">
    <property type="entry name" value="RNApol_RpoC1"/>
</dbReference>
<dbReference type="NCBIfam" id="NF002729">
    <property type="entry name" value="PRK02625.1"/>
    <property type="match status" value="1"/>
</dbReference>
<dbReference type="NCBIfam" id="TIGR02387">
    <property type="entry name" value="rpoC1_cyan"/>
    <property type="match status" value="1"/>
</dbReference>
<dbReference type="PANTHER" id="PTHR19376">
    <property type="entry name" value="DNA-DIRECTED RNA POLYMERASE"/>
    <property type="match status" value="1"/>
</dbReference>
<dbReference type="PANTHER" id="PTHR19376:SF54">
    <property type="entry name" value="DNA-DIRECTED RNA POLYMERASE SUBUNIT BETA"/>
    <property type="match status" value="1"/>
</dbReference>
<dbReference type="Pfam" id="PF04997">
    <property type="entry name" value="RNA_pol_Rpb1_1"/>
    <property type="match status" value="1"/>
</dbReference>
<dbReference type="Pfam" id="PF00623">
    <property type="entry name" value="RNA_pol_Rpb1_2"/>
    <property type="match status" value="2"/>
</dbReference>
<dbReference type="Pfam" id="PF04983">
    <property type="entry name" value="RNA_pol_Rpb1_3"/>
    <property type="match status" value="1"/>
</dbReference>
<dbReference type="SMART" id="SM00663">
    <property type="entry name" value="RPOLA_N"/>
    <property type="match status" value="1"/>
</dbReference>
<dbReference type="SUPFAM" id="SSF64484">
    <property type="entry name" value="beta and beta-prime subunits of DNA dependent RNA-polymerase"/>
    <property type="match status" value="1"/>
</dbReference>
<accession>O78484</accession>
<geneLocation type="chloroplast"/>